<sequence length="406" mass="46214">MSYFTEYKDLIAEGDLVLVWISRGNVKQLRIKSGEVFNTRYGSFAHDDIVGRPYGSQIGVRTKGSNRFGFIHVLQPTPELWTLSLPHRTQIVYTPDSSYIMQRLGCSPQSRVIEAGTGSGSFSHAFARTVGQLFSYEFHHMRYEQALAEFQEHGLIADGNVTITHRDVCQKGFLIKAGDTTSYEFLEGQDSVSVNADCIFLDLPAPWEAIPHLDAVIAKDRTARLCCFSPCIEQVDKTLEALELHGWEEIETVEIQGRQYESRRQMVRQLDDALERLRDVKRRKQHGTERRKRLGEQLGSVEELTDDVRPKTPKTSYNPFGKGSRVKEGDNGFEWKQVAKVESEIKSHTSYLTFASKILFKSRDENTVSQLLEQYKDFNPNVKAASKLDKRPQETSFEESQASNSV</sequence>
<dbReference type="EC" id="2.1.1.220"/>
<dbReference type="EMBL" id="AE016819">
    <property type="protein sequence ID" value="AAS53160.1"/>
    <property type="molecule type" value="Genomic_DNA"/>
</dbReference>
<dbReference type="RefSeq" id="NP_985336.1">
    <property type="nucleotide sequence ID" value="NM_210690.1"/>
</dbReference>
<dbReference type="SMR" id="Q755M8"/>
<dbReference type="FunCoup" id="Q755M8">
    <property type="interactions" value="635"/>
</dbReference>
<dbReference type="STRING" id="284811.Q755M8"/>
<dbReference type="EnsemblFungi" id="AAS53160">
    <property type="protein sequence ID" value="AAS53160"/>
    <property type="gene ID" value="AGOS_AFL214C"/>
</dbReference>
<dbReference type="GeneID" id="4621560"/>
<dbReference type="KEGG" id="ago:AGOS_AFL214C"/>
<dbReference type="eggNOG" id="KOG2915">
    <property type="taxonomic scope" value="Eukaryota"/>
</dbReference>
<dbReference type="HOGENOM" id="CLU_025402_4_0_1"/>
<dbReference type="InParanoid" id="Q755M8"/>
<dbReference type="OMA" id="RPDHRMI"/>
<dbReference type="OrthoDB" id="1925287at2759"/>
<dbReference type="Proteomes" id="UP000000591">
    <property type="component" value="Chromosome VI"/>
</dbReference>
<dbReference type="GO" id="GO:0005634">
    <property type="term" value="C:nucleus"/>
    <property type="evidence" value="ECO:0000318"/>
    <property type="project" value="GO_Central"/>
</dbReference>
<dbReference type="GO" id="GO:0031515">
    <property type="term" value="C:tRNA (m1A) methyltransferase complex"/>
    <property type="evidence" value="ECO:0000318"/>
    <property type="project" value="GO_Central"/>
</dbReference>
<dbReference type="GO" id="GO:0160107">
    <property type="term" value="F:tRNA (adenine(58)-N1)-methyltransferase activity"/>
    <property type="evidence" value="ECO:0007669"/>
    <property type="project" value="UniProtKB-EC"/>
</dbReference>
<dbReference type="GO" id="GO:0030488">
    <property type="term" value="P:tRNA methylation"/>
    <property type="evidence" value="ECO:0000318"/>
    <property type="project" value="GO_Central"/>
</dbReference>
<dbReference type="FunFam" id="3.10.330.20:FF:000002">
    <property type="entry name" value="tRNA (adenine(58)-N(1))-methyltransferase catalytic subunit TRMT61A"/>
    <property type="match status" value="1"/>
</dbReference>
<dbReference type="Gene3D" id="3.10.330.20">
    <property type="match status" value="1"/>
</dbReference>
<dbReference type="Gene3D" id="3.40.50.150">
    <property type="entry name" value="Vaccinia Virus protein VP39"/>
    <property type="match status" value="1"/>
</dbReference>
<dbReference type="InterPro" id="IPR029063">
    <property type="entry name" value="SAM-dependent_MTases_sf"/>
</dbReference>
<dbReference type="InterPro" id="IPR049470">
    <property type="entry name" value="TRM61_C"/>
</dbReference>
<dbReference type="InterPro" id="IPR014816">
    <property type="entry name" value="tRNA_MeTrfase_Gcd14"/>
</dbReference>
<dbReference type="PANTHER" id="PTHR12133">
    <property type="entry name" value="TRNA (ADENINE(58)-N(1))-METHYLTRANSFERASE"/>
    <property type="match status" value="1"/>
</dbReference>
<dbReference type="PANTHER" id="PTHR12133:SF2">
    <property type="entry name" value="TRNA (ADENINE(58)-N(1))-METHYLTRANSFERASE CATALYTIC SUBUNIT TRMT61A"/>
    <property type="match status" value="1"/>
</dbReference>
<dbReference type="Pfam" id="PF08704">
    <property type="entry name" value="GCD14"/>
    <property type="match status" value="1"/>
</dbReference>
<dbReference type="Pfam" id="PF14801">
    <property type="entry name" value="TrmI-like_N"/>
    <property type="match status" value="1"/>
</dbReference>
<dbReference type="PIRSF" id="PIRSF017269">
    <property type="entry name" value="GCD14"/>
    <property type="match status" value="1"/>
</dbReference>
<dbReference type="SUPFAM" id="SSF53335">
    <property type="entry name" value="S-adenosyl-L-methionine-dependent methyltransferases"/>
    <property type="match status" value="1"/>
</dbReference>
<dbReference type="PROSITE" id="PS51620">
    <property type="entry name" value="SAM_TRM61"/>
    <property type="match status" value="1"/>
</dbReference>
<accession>Q755M8</accession>
<organism>
    <name type="scientific">Eremothecium gossypii (strain ATCC 10895 / CBS 109.51 / FGSC 9923 / NRRL Y-1056)</name>
    <name type="common">Yeast</name>
    <name type="synonym">Ashbya gossypii</name>
    <dbReference type="NCBI Taxonomy" id="284811"/>
    <lineage>
        <taxon>Eukaryota</taxon>
        <taxon>Fungi</taxon>
        <taxon>Dikarya</taxon>
        <taxon>Ascomycota</taxon>
        <taxon>Saccharomycotina</taxon>
        <taxon>Saccharomycetes</taxon>
        <taxon>Saccharomycetales</taxon>
        <taxon>Saccharomycetaceae</taxon>
        <taxon>Eremothecium</taxon>
    </lineage>
</organism>
<comment type="function">
    <text evidence="1">Catalytic subunit of tRNA (adenine-N(1)-)-methyltransferase, which catalyzes the formation of N(1)-methyladenine at position 58 (m1A58) in initiator methionyl-tRNA.</text>
</comment>
<comment type="catalytic activity">
    <reaction evidence="3">
        <text>adenosine(58) in tRNA + S-adenosyl-L-methionine = N(1)-methyladenosine(58) in tRNA + S-adenosyl-L-homocysteine + H(+)</text>
        <dbReference type="Rhea" id="RHEA:43152"/>
        <dbReference type="Rhea" id="RHEA-COMP:10365"/>
        <dbReference type="Rhea" id="RHEA-COMP:10366"/>
        <dbReference type="ChEBI" id="CHEBI:15378"/>
        <dbReference type="ChEBI" id="CHEBI:57856"/>
        <dbReference type="ChEBI" id="CHEBI:59789"/>
        <dbReference type="ChEBI" id="CHEBI:74411"/>
        <dbReference type="ChEBI" id="CHEBI:74491"/>
        <dbReference type="EC" id="2.1.1.220"/>
    </reaction>
</comment>
<comment type="subunit">
    <text evidence="1">Heterotetramer; composed of two copies of TRM6 and two copies of TRM61.</text>
</comment>
<comment type="subcellular location">
    <subcellularLocation>
        <location evidence="1">Nucleus</location>
    </subcellularLocation>
</comment>
<comment type="similarity">
    <text evidence="3">Belongs to the class I-like SAM-binding methyltransferase superfamily. TRM61 family.</text>
</comment>
<name>TRM61_EREGS</name>
<keyword id="KW-0489">Methyltransferase</keyword>
<keyword id="KW-0539">Nucleus</keyword>
<keyword id="KW-1185">Reference proteome</keyword>
<keyword id="KW-0949">S-adenosyl-L-methionine</keyword>
<keyword id="KW-0808">Transferase</keyword>
<keyword id="KW-0819">tRNA processing</keyword>
<evidence type="ECO:0000250" key="1">
    <source>
        <dbReference type="UniProtKB" id="P46959"/>
    </source>
</evidence>
<evidence type="ECO:0000250" key="2">
    <source>
        <dbReference type="UniProtKB" id="Q96FX7"/>
    </source>
</evidence>
<evidence type="ECO:0000255" key="3">
    <source>
        <dbReference type="PROSITE-ProRule" id="PRU00952"/>
    </source>
</evidence>
<evidence type="ECO:0000256" key="4">
    <source>
        <dbReference type="SAM" id="MobiDB-lite"/>
    </source>
</evidence>
<feature type="chain" id="PRO_0000256167" description="tRNA (adenine(58)-N(1))-methyltransferase catalytic subunit TRM61">
    <location>
        <begin position="1"/>
        <end position="406"/>
    </location>
</feature>
<feature type="region of interest" description="Disordered" evidence="4">
    <location>
        <begin position="281"/>
        <end position="323"/>
    </location>
</feature>
<feature type="region of interest" description="Disordered" evidence="4">
    <location>
        <begin position="385"/>
        <end position="406"/>
    </location>
</feature>
<feature type="compositionally biased region" description="Basic residues" evidence="4">
    <location>
        <begin position="281"/>
        <end position="293"/>
    </location>
</feature>
<feature type="compositionally biased region" description="Polar residues" evidence="4">
    <location>
        <begin position="394"/>
        <end position="406"/>
    </location>
</feature>
<feature type="binding site" evidence="2">
    <location>
        <begin position="119"/>
        <end position="121"/>
    </location>
    <ligand>
        <name>S-adenosyl-L-methionine</name>
        <dbReference type="ChEBI" id="CHEBI:59789"/>
    </ligand>
</feature>
<feature type="binding site" evidence="2 3">
    <location>
        <position position="137"/>
    </location>
    <ligand>
        <name>S-adenosyl-L-methionine</name>
        <dbReference type="ChEBI" id="CHEBI:59789"/>
    </ligand>
</feature>
<feature type="binding site" evidence="2">
    <location>
        <position position="142"/>
    </location>
    <ligand>
        <name>S-adenosyl-L-methionine</name>
        <dbReference type="ChEBI" id="CHEBI:59789"/>
    </ligand>
</feature>
<feature type="binding site" evidence="2">
    <location>
        <begin position="167"/>
        <end position="168"/>
    </location>
    <ligand>
        <name>S-adenosyl-L-methionine</name>
        <dbReference type="ChEBI" id="CHEBI:59789"/>
    </ligand>
</feature>
<feature type="binding site" evidence="2 3">
    <location>
        <position position="202"/>
    </location>
    <ligand>
        <name>S-adenosyl-L-methionine</name>
        <dbReference type="ChEBI" id="CHEBI:59789"/>
    </ligand>
</feature>
<proteinExistence type="inferred from homology"/>
<gene>
    <name type="primary">TRM61</name>
    <name type="ordered locus">AFL214C</name>
</gene>
<reference key="1">
    <citation type="journal article" date="2004" name="Science">
        <title>The Ashbya gossypii genome as a tool for mapping the ancient Saccharomyces cerevisiae genome.</title>
        <authorList>
            <person name="Dietrich F.S."/>
            <person name="Voegeli S."/>
            <person name="Brachat S."/>
            <person name="Lerch A."/>
            <person name="Gates K."/>
            <person name="Steiner S."/>
            <person name="Mohr C."/>
            <person name="Poehlmann R."/>
            <person name="Luedi P."/>
            <person name="Choi S."/>
            <person name="Wing R.A."/>
            <person name="Flavier A."/>
            <person name="Gaffney T.D."/>
            <person name="Philippsen P."/>
        </authorList>
    </citation>
    <scope>NUCLEOTIDE SEQUENCE [LARGE SCALE GENOMIC DNA]</scope>
    <source>
        <strain>ATCC 10895 / CBS 109.51 / FGSC 9923 / NRRL Y-1056</strain>
    </source>
</reference>
<reference key="2">
    <citation type="journal article" date="2013" name="G3 (Bethesda)">
        <title>Genomes of Ashbya fungi isolated from insects reveal four mating-type loci, numerous translocations, lack of transposons, and distinct gene duplications.</title>
        <authorList>
            <person name="Dietrich F.S."/>
            <person name="Voegeli S."/>
            <person name="Kuo S."/>
            <person name="Philippsen P."/>
        </authorList>
    </citation>
    <scope>GENOME REANNOTATION</scope>
    <source>
        <strain>ATCC 10895 / CBS 109.51 / FGSC 9923 / NRRL Y-1056</strain>
    </source>
</reference>
<protein>
    <recommendedName>
        <fullName>tRNA (adenine(58)-N(1))-methyltransferase catalytic subunit TRM61</fullName>
        <ecNumber>2.1.1.220</ecNumber>
    </recommendedName>
    <alternativeName>
        <fullName>tRNA(m1A58)-methyltransferase subunit TRM61</fullName>
        <shortName>tRNA(m1A58)MTase subunit TRM61</shortName>
    </alternativeName>
</protein>